<evidence type="ECO:0000250" key="1"/>
<evidence type="ECO:0000250" key="2">
    <source>
        <dbReference type="UniProtKB" id="P00748"/>
    </source>
</evidence>
<evidence type="ECO:0000255" key="3">
    <source>
        <dbReference type="PROSITE-ProRule" id="PRU00076"/>
    </source>
</evidence>
<evidence type="ECO:0000255" key="4">
    <source>
        <dbReference type="PROSITE-ProRule" id="PRU00121"/>
    </source>
</evidence>
<evidence type="ECO:0000255" key="5">
    <source>
        <dbReference type="PROSITE-ProRule" id="PRU00274"/>
    </source>
</evidence>
<evidence type="ECO:0000255" key="6">
    <source>
        <dbReference type="PROSITE-ProRule" id="PRU00478"/>
    </source>
</evidence>
<evidence type="ECO:0000255" key="7">
    <source>
        <dbReference type="PROSITE-ProRule" id="PRU00479"/>
    </source>
</evidence>
<evidence type="ECO:0000256" key="8">
    <source>
        <dbReference type="SAM" id="MobiDB-lite"/>
    </source>
</evidence>
<evidence type="ECO:0000305" key="9"/>
<organism>
    <name type="scientific">Rattus norvegicus</name>
    <name type="common">Rat</name>
    <dbReference type="NCBI Taxonomy" id="10116"/>
    <lineage>
        <taxon>Eukaryota</taxon>
        <taxon>Metazoa</taxon>
        <taxon>Chordata</taxon>
        <taxon>Craniata</taxon>
        <taxon>Vertebrata</taxon>
        <taxon>Euteleostomi</taxon>
        <taxon>Mammalia</taxon>
        <taxon>Eutheria</taxon>
        <taxon>Euarchontoglires</taxon>
        <taxon>Glires</taxon>
        <taxon>Rodentia</taxon>
        <taxon>Myomorpha</taxon>
        <taxon>Muroidea</taxon>
        <taxon>Muridae</taxon>
        <taxon>Murinae</taxon>
        <taxon>Rattus</taxon>
    </lineage>
</organism>
<name>FA12_RAT</name>
<reference key="1">
    <citation type="submission" date="2005-07" db="EMBL/GenBank/DDBJ databases">
        <authorList>
            <person name="Mural R.J."/>
            <person name="Adams M.D."/>
            <person name="Myers E.W."/>
            <person name="Smith H.O."/>
            <person name="Venter J.C."/>
        </authorList>
    </citation>
    <scope>NUCLEOTIDE SEQUENCE [LARGE SCALE GENOMIC DNA]</scope>
</reference>
<reference key="2">
    <citation type="journal article" date="2004" name="Genome Res.">
        <title>The status, quality, and expansion of the NIH full-length cDNA project: the Mammalian Gene Collection (MGC).</title>
        <authorList>
            <consortium name="The MGC Project Team"/>
        </authorList>
    </citation>
    <scope>NUCLEOTIDE SEQUENCE [LARGE SCALE MRNA]</scope>
    <source>
        <tissue>Liver</tissue>
    </source>
</reference>
<protein>
    <recommendedName>
        <fullName>Coagulation factor XII</fullName>
        <ecNumber evidence="2">3.4.21.38</ecNumber>
    </recommendedName>
    <alternativeName>
        <fullName>Hageman factor</fullName>
        <shortName>HAF</shortName>
    </alternativeName>
    <component>
        <recommendedName>
            <fullName>Coagulation factor XIIa heavy chain</fullName>
        </recommendedName>
    </component>
    <component>
        <recommendedName>
            <fullName>Coagulation factor XIIa light chain</fullName>
        </recommendedName>
    </component>
</protein>
<sequence>MTALLFLGSLLMSLDLTLSAPPWKSKEFKDGAGDPSVVLTVDGKLCHFPFQYHRRLYHKCIHKGQPGSRPWCATTPNFDEDQQWGYCLEPKKVKDHCSKHSPCHKGGTCVNTPNGPHCLCPEHLTGKHCQREKCFESQLLKFFHENEIWFRTGPGGVARCQCKGPQAVCKLLTSQVCRVNPCLNGGTCLLVEDHRLCHCPAGYAGPFCDLDLKATCYEDRGLSYRGQAKTTLSGAPCQRWASEATYRNMTETQALSWGLGHHAFCRNPDNDTRPWCYVWSGDRLSWDYCDLEQCQMPTLTSPVSPESHDMLKPRPPILQSSPRDSTRNQNVVSRTSTVVCGQRFRKRLSSLRRVVGGLVALPGSHPYIAALYWGDSFCAGSLIDPCWVLTAAHCLQKRPAPEELTVVLGQDRHNQSCERCQTLAVHSYRLHEGFSSKTYQHDLALLRLRGRKNSCAILSPHVQPVCLPSSAAPPSETVLCEVAGWGHQFEGAEEYATFLQEAQVPFISLDRCSSSNVHGDAILPGMLCAGFLEGGADACQGDSGGPLVCDEGVTERQLTLRGVISWGSGCGDRNKPGVYTDVANYLDWIQEHTAF</sequence>
<accession>D3ZTE0</accession>
<accession>Q5M879</accession>
<proteinExistence type="evidence at transcript level"/>
<dbReference type="EC" id="3.4.21.38" evidence="2"/>
<dbReference type="EMBL" id="CH474032">
    <property type="protein sequence ID" value="EDL93987.1"/>
    <property type="status" value="ALT_SEQ"/>
    <property type="molecule type" value="Genomic_DNA"/>
</dbReference>
<dbReference type="EMBL" id="BC088187">
    <property type="protein sequence ID" value="AAH88187.1"/>
    <property type="molecule type" value="mRNA"/>
</dbReference>
<dbReference type="RefSeq" id="NP_001014028.1">
    <property type="nucleotide sequence ID" value="NM_001014006.1"/>
</dbReference>
<dbReference type="SMR" id="D3ZTE0"/>
<dbReference type="FunCoup" id="D3ZTE0">
    <property type="interactions" value="53"/>
</dbReference>
<dbReference type="IntAct" id="D3ZTE0">
    <property type="interactions" value="1"/>
</dbReference>
<dbReference type="STRING" id="10116.ENSRNOP00000061983"/>
<dbReference type="MEROPS" id="S01.211"/>
<dbReference type="GlyCosmos" id="D3ZTE0">
    <property type="glycosylation" value="6 sites, No reported glycans"/>
</dbReference>
<dbReference type="GlyGen" id="D3ZTE0">
    <property type="glycosylation" value="6 sites"/>
</dbReference>
<dbReference type="PhosphoSitePlus" id="D3ZTE0"/>
<dbReference type="PaxDb" id="10116-ENSRNOP00000061983"/>
<dbReference type="PeptideAtlas" id="D3ZTE0"/>
<dbReference type="GeneID" id="306761"/>
<dbReference type="KEGG" id="rno:306761"/>
<dbReference type="UCSC" id="RGD:1359175">
    <property type="organism name" value="rat"/>
</dbReference>
<dbReference type="AGR" id="RGD:1359175"/>
<dbReference type="CTD" id="2161"/>
<dbReference type="RGD" id="1359175">
    <property type="gene designation" value="F12"/>
</dbReference>
<dbReference type="VEuPathDB" id="HostDB:ENSRNOG00000015139"/>
<dbReference type="eggNOG" id="KOG1217">
    <property type="taxonomic scope" value="Eukaryota"/>
</dbReference>
<dbReference type="eggNOG" id="KOG3627">
    <property type="taxonomic scope" value="Eukaryota"/>
</dbReference>
<dbReference type="InParanoid" id="D3ZTE0"/>
<dbReference type="OrthoDB" id="9925451at2759"/>
<dbReference type="PhylomeDB" id="D3ZTE0"/>
<dbReference type="TreeFam" id="TF329901"/>
<dbReference type="BRENDA" id="3.4.21.38">
    <property type="organism ID" value="5301"/>
</dbReference>
<dbReference type="Reactome" id="R-RNO-140837">
    <property type="pathway name" value="Intrinsic Pathway of Fibrin Clot Formation"/>
</dbReference>
<dbReference type="PRO" id="PR:D3ZTE0"/>
<dbReference type="Proteomes" id="UP000002494">
    <property type="component" value="Chromosome 17"/>
</dbReference>
<dbReference type="Proteomes" id="UP000234681">
    <property type="component" value="Chromosome 17"/>
</dbReference>
<dbReference type="Bgee" id="ENSRNOG00000015139">
    <property type="expression patterns" value="Expressed in liver and 6 other cell types or tissues"/>
</dbReference>
<dbReference type="ExpressionAtlas" id="D3ZTE0">
    <property type="expression patterns" value="baseline and differential"/>
</dbReference>
<dbReference type="GO" id="GO:0005615">
    <property type="term" value="C:extracellular space"/>
    <property type="evidence" value="ECO:0000314"/>
    <property type="project" value="RGD"/>
</dbReference>
<dbReference type="GO" id="GO:0005791">
    <property type="term" value="C:rough endoplasmic reticulum"/>
    <property type="evidence" value="ECO:0000318"/>
    <property type="project" value="GO_Central"/>
</dbReference>
<dbReference type="GO" id="GO:0005509">
    <property type="term" value="F:calcium ion binding"/>
    <property type="evidence" value="ECO:0007669"/>
    <property type="project" value="InterPro"/>
</dbReference>
<dbReference type="GO" id="GO:0008233">
    <property type="term" value="F:peptidase activity"/>
    <property type="evidence" value="ECO:0000266"/>
    <property type="project" value="RGD"/>
</dbReference>
<dbReference type="GO" id="GO:0004252">
    <property type="term" value="F:serine-type endopeptidase activity"/>
    <property type="evidence" value="ECO:0000266"/>
    <property type="project" value="RGD"/>
</dbReference>
<dbReference type="GO" id="GO:0007596">
    <property type="term" value="P:blood coagulation"/>
    <property type="evidence" value="ECO:0000266"/>
    <property type="project" value="RGD"/>
</dbReference>
<dbReference type="GO" id="GO:0002542">
    <property type="term" value="P:Factor XII activation"/>
    <property type="evidence" value="ECO:0000266"/>
    <property type="project" value="RGD"/>
</dbReference>
<dbReference type="GO" id="GO:0042730">
    <property type="term" value="P:fibrinolysis"/>
    <property type="evidence" value="ECO:0007669"/>
    <property type="project" value="UniProtKB-KW"/>
</dbReference>
<dbReference type="GO" id="GO:0002353">
    <property type="term" value="P:plasma kallikrein-kinin cascade"/>
    <property type="evidence" value="ECO:0000266"/>
    <property type="project" value="RGD"/>
</dbReference>
<dbReference type="GO" id="GO:0030194">
    <property type="term" value="P:positive regulation of blood coagulation"/>
    <property type="evidence" value="ECO:0000266"/>
    <property type="project" value="RGD"/>
</dbReference>
<dbReference type="GO" id="GO:0051919">
    <property type="term" value="P:positive regulation of fibrinolysis"/>
    <property type="evidence" value="ECO:0000266"/>
    <property type="project" value="RGD"/>
</dbReference>
<dbReference type="GO" id="GO:0010756">
    <property type="term" value="P:positive regulation of plasminogen activation"/>
    <property type="evidence" value="ECO:0000266"/>
    <property type="project" value="RGD"/>
</dbReference>
<dbReference type="GO" id="GO:0016540">
    <property type="term" value="P:protein autoprocessing"/>
    <property type="evidence" value="ECO:0000266"/>
    <property type="project" value="RGD"/>
</dbReference>
<dbReference type="GO" id="GO:0016485">
    <property type="term" value="P:protein processing"/>
    <property type="evidence" value="ECO:0000266"/>
    <property type="project" value="RGD"/>
</dbReference>
<dbReference type="GO" id="GO:0051788">
    <property type="term" value="P:response to misfolded protein"/>
    <property type="evidence" value="ECO:0000266"/>
    <property type="project" value="RGD"/>
</dbReference>
<dbReference type="GO" id="GO:0031638">
    <property type="term" value="P:zymogen activation"/>
    <property type="evidence" value="ECO:0000266"/>
    <property type="project" value="RGD"/>
</dbReference>
<dbReference type="CDD" id="cd00054">
    <property type="entry name" value="EGF_CA"/>
    <property type="match status" value="2"/>
</dbReference>
<dbReference type="CDD" id="cd00061">
    <property type="entry name" value="FN1"/>
    <property type="match status" value="1"/>
</dbReference>
<dbReference type="CDD" id="cd00062">
    <property type="entry name" value="FN2"/>
    <property type="match status" value="1"/>
</dbReference>
<dbReference type="CDD" id="cd00108">
    <property type="entry name" value="KR"/>
    <property type="match status" value="1"/>
</dbReference>
<dbReference type="CDD" id="cd00190">
    <property type="entry name" value="Tryp_SPc"/>
    <property type="match status" value="1"/>
</dbReference>
<dbReference type="FunFam" id="2.10.10.10:FF:000010">
    <property type="entry name" value="Coagulation factor XII"/>
    <property type="match status" value="1"/>
</dbReference>
<dbReference type="FunFam" id="2.10.25.10:FF:000576">
    <property type="entry name" value="Coagulation factor XII"/>
    <property type="match status" value="1"/>
</dbReference>
<dbReference type="FunFam" id="2.40.10.10:FF:000097">
    <property type="entry name" value="Coagulation factor XII"/>
    <property type="match status" value="1"/>
</dbReference>
<dbReference type="FunFam" id="2.40.10.10:FF:000098">
    <property type="entry name" value="Coagulation factor XII"/>
    <property type="match status" value="1"/>
</dbReference>
<dbReference type="FunFam" id="2.40.20.10:FF:000016">
    <property type="entry name" value="Coagulation factor XII"/>
    <property type="match status" value="1"/>
</dbReference>
<dbReference type="FunFam" id="2.10.25.10:FF:000338">
    <property type="entry name" value="hepatocyte growth factor activator"/>
    <property type="match status" value="1"/>
</dbReference>
<dbReference type="Gene3D" id="2.10.10.10">
    <property type="entry name" value="Fibronectin, type II, collagen-binding"/>
    <property type="match status" value="1"/>
</dbReference>
<dbReference type="Gene3D" id="2.10.25.10">
    <property type="entry name" value="Laminin"/>
    <property type="match status" value="2"/>
</dbReference>
<dbReference type="Gene3D" id="2.40.20.10">
    <property type="entry name" value="Plasminogen Kringle 4"/>
    <property type="match status" value="1"/>
</dbReference>
<dbReference type="Gene3D" id="2.40.10.10">
    <property type="entry name" value="Trypsin-like serine proteases"/>
    <property type="match status" value="2"/>
</dbReference>
<dbReference type="InterPro" id="IPR014394">
    <property type="entry name" value="Coagulation_fac_XII/HGFA"/>
</dbReference>
<dbReference type="InterPro" id="IPR001881">
    <property type="entry name" value="EGF-like_Ca-bd_dom"/>
</dbReference>
<dbReference type="InterPro" id="IPR000742">
    <property type="entry name" value="EGF-like_dom"/>
</dbReference>
<dbReference type="InterPro" id="IPR000083">
    <property type="entry name" value="Fibronectin_type1"/>
</dbReference>
<dbReference type="InterPro" id="IPR000562">
    <property type="entry name" value="FN_type2_dom"/>
</dbReference>
<dbReference type="InterPro" id="IPR036943">
    <property type="entry name" value="FN_type2_sf"/>
</dbReference>
<dbReference type="InterPro" id="IPR000001">
    <property type="entry name" value="Kringle"/>
</dbReference>
<dbReference type="InterPro" id="IPR013806">
    <property type="entry name" value="Kringle-like"/>
</dbReference>
<dbReference type="InterPro" id="IPR018056">
    <property type="entry name" value="Kringle_CS"/>
</dbReference>
<dbReference type="InterPro" id="IPR038178">
    <property type="entry name" value="Kringle_sf"/>
</dbReference>
<dbReference type="InterPro" id="IPR009003">
    <property type="entry name" value="Peptidase_S1_PA"/>
</dbReference>
<dbReference type="InterPro" id="IPR043504">
    <property type="entry name" value="Peptidase_S1_PA_chymotrypsin"/>
</dbReference>
<dbReference type="InterPro" id="IPR001314">
    <property type="entry name" value="Peptidase_S1A"/>
</dbReference>
<dbReference type="InterPro" id="IPR050127">
    <property type="entry name" value="Serine_Proteases_S1"/>
</dbReference>
<dbReference type="InterPro" id="IPR001254">
    <property type="entry name" value="Trypsin_dom"/>
</dbReference>
<dbReference type="InterPro" id="IPR018114">
    <property type="entry name" value="TRYPSIN_HIS"/>
</dbReference>
<dbReference type="InterPro" id="IPR033116">
    <property type="entry name" value="TRYPSIN_SER"/>
</dbReference>
<dbReference type="PANTHER" id="PTHR24264:SF46">
    <property type="entry name" value="COAGULATION FACTOR XII"/>
    <property type="match status" value="1"/>
</dbReference>
<dbReference type="PANTHER" id="PTHR24264">
    <property type="entry name" value="TRYPSIN-RELATED"/>
    <property type="match status" value="1"/>
</dbReference>
<dbReference type="Pfam" id="PF00008">
    <property type="entry name" value="EGF"/>
    <property type="match status" value="2"/>
</dbReference>
<dbReference type="Pfam" id="PF00039">
    <property type="entry name" value="fn1"/>
    <property type="match status" value="1"/>
</dbReference>
<dbReference type="Pfam" id="PF00040">
    <property type="entry name" value="fn2"/>
    <property type="match status" value="1"/>
</dbReference>
<dbReference type="Pfam" id="PF00051">
    <property type="entry name" value="Kringle"/>
    <property type="match status" value="1"/>
</dbReference>
<dbReference type="Pfam" id="PF00089">
    <property type="entry name" value="Trypsin"/>
    <property type="match status" value="1"/>
</dbReference>
<dbReference type="PIRSF" id="PIRSF001146">
    <property type="entry name" value="Factor_XII_HGFA"/>
    <property type="match status" value="1"/>
</dbReference>
<dbReference type="PRINTS" id="PR00722">
    <property type="entry name" value="CHYMOTRYPSIN"/>
</dbReference>
<dbReference type="PRINTS" id="PR00013">
    <property type="entry name" value="FNTYPEII"/>
</dbReference>
<dbReference type="PRINTS" id="PR00018">
    <property type="entry name" value="KRINGLE"/>
</dbReference>
<dbReference type="SMART" id="SM00181">
    <property type="entry name" value="EGF"/>
    <property type="match status" value="2"/>
</dbReference>
<dbReference type="SMART" id="SM00179">
    <property type="entry name" value="EGF_CA"/>
    <property type="match status" value="2"/>
</dbReference>
<dbReference type="SMART" id="SM00058">
    <property type="entry name" value="FN1"/>
    <property type="match status" value="1"/>
</dbReference>
<dbReference type="SMART" id="SM00059">
    <property type="entry name" value="FN2"/>
    <property type="match status" value="1"/>
</dbReference>
<dbReference type="SMART" id="SM00130">
    <property type="entry name" value="KR"/>
    <property type="match status" value="1"/>
</dbReference>
<dbReference type="SMART" id="SM00020">
    <property type="entry name" value="Tryp_SPc"/>
    <property type="match status" value="1"/>
</dbReference>
<dbReference type="SUPFAM" id="SSF57196">
    <property type="entry name" value="EGF/Laminin"/>
    <property type="match status" value="1"/>
</dbReference>
<dbReference type="SUPFAM" id="SSF57440">
    <property type="entry name" value="Kringle-like"/>
    <property type="match status" value="2"/>
</dbReference>
<dbReference type="SUPFAM" id="SSF50494">
    <property type="entry name" value="Trypsin-like serine proteases"/>
    <property type="match status" value="1"/>
</dbReference>
<dbReference type="PROSITE" id="PS00022">
    <property type="entry name" value="EGF_1"/>
    <property type="match status" value="2"/>
</dbReference>
<dbReference type="PROSITE" id="PS01186">
    <property type="entry name" value="EGF_2"/>
    <property type="match status" value="1"/>
</dbReference>
<dbReference type="PROSITE" id="PS50026">
    <property type="entry name" value="EGF_3"/>
    <property type="match status" value="2"/>
</dbReference>
<dbReference type="PROSITE" id="PS01253">
    <property type="entry name" value="FN1_1"/>
    <property type="match status" value="1"/>
</dbReference>
<dbReference type="PROSITE" id="PS51091">
    <property type="entry name" value="FN1_2"/>
    <property type="match status" value="1"/>
</dbReference>
<dbReference type="PROSITE" id="PS00023">
    <property type="entry name" value="FN2_1"/>
    <property type="match status" value="1"/>
</dbReference>
<dbReference type="PROSITE" id="PS51092">
    <property type="entry name" value="FN2_2"/>
    <property type="match status" value="1"/>
</dbReference>
<dbReference type="PROSITE" id="PS00021">
    <property type="entry name" value="KRINGLE_1"/>
    <property type="match status" value="1"/>
</dbReference>
<dbReference type="PROSITE" id="PS50070">
    <property type="entry name" value="KRINGLE_2"/>
    <property type="match status" value="1"/>
</dbReference>
<dbReference type="PROSITE" id="PS50240">
    <property type="entry name" value="TRYPSIN_DOM"/>
    <property type="match status" value="1"/>
</dbReference>
<dbReference type="PROSITE" id="PS00134">
    <property type="entry name" value="TRYPSIN_HIS"/>
    <property type="match status" value="1"/>
</dbReference>
<dbReference type="PROSITE" id="PS00135">
    <property type="entry name" value="TRYPSIN_SER"/>
    <property type="match status" value="1"/>
</dbReference>
<feature type="signal peptide" evidence="1">
    <location>
        <begin position="1"/>
        <end position="19"/>
    </location>
</feature>
<feature type="chain" id="PRO_0000394557" description="Coagulation factor XIIa heavy chain">
    <location>
        <begin position="20"/>
        <end position="353"/>
    </location>
</feature>
<feature type="chain" id="PRO_0000394558" description="Coagulation factor XIIa light chain">
    <location>
        <begin position="354"/>
        <end position="595"/>
    </location>
</feature>
<feature type="domain" description="Fibronectin type-II" evidence="6 7">
    <location>
        <begin position="41"/>
        <end position="89"/>
    </location>
</feature>
<feature type="domain" description="EGF-like 1" evidence="3">
    <location>
        <begin position="93"/>
        <end position="130"/>
    </location>
</feature>
<feature type="domain" description="Fibronectin type-I" evidence="6">
    <location>
        <begin position="132"/>
        <end position="172"/>
    </location>
</feature>
<feature type="domain" description="EGF-like 2" evidence="3">
    <location>
        <begin position="173"/>
        <end position="209"/>
    </location>
</feature>
<feature type="domain" description="Kringle" evidence="4">
    <location>
        <begin position="215"/>
        <end position="294"/>
    </location>
</feature>
<feature type="domain" description="Peptidase S1" evidence="5">
    <location>
        <begin position="354"/>
        <end position="594"/>
    </location>
</feature>
<feature type="region of interest" description="Disordered" evidence="8">
    <location>
        <begin position="302"/>
        <end position="332"/>
    </location>
</feature>
<feature type="compositionally biased region" description="Polar residues" evidence="8">
    <location>
        <begin position="318"/>
        <end position="332"/>
    </location>
</feature>
<feature type="active site" description="Charge relay system" evidence="1">
    <location>
        <position position="393"/>
    </location>
</feature>
<feature type="active site" description="Charge relay system" evidence="1">
    <location>
        <position position="442"/>
    </location>
</feature>
<feature type="active site" description="Charge relay system" evidence="1">
    <location>
        <position position="543"/>
    </location>
</feature>
<feature type="glycosylation site" description="O-linked (Fuc) threonine" evidence="1">
    <location>
        <position position="108"/>
    </location>
</feature>
<feature type="glycosylation site" description="N-linked (GlcNAc...) asparagine" evidence="1">
    <location>
        <position position="248"/>
    </location>
</feature>
<feature type="glycosylation site" description="O-linked (GalNAc...) threonine" evidence="1">
    <location>
        <position position="298"/>
    </location>
</feature>
<feature type="glycosylation site" description="O-linked (GalNAc...) serine" evidence="1">
    <location>
        <position position="307"/>
    </location>
</feature>
<feature type="glycosylation site" description="O-linked (GalNAc...) threonine" evidence="1">
    <location>
        <position position="326"/>
    </location>
</feature>
<feature type="glycosylation site" description="N-linked (GlcNAc...) asparagine" evidence="1">
    <location>
        <position position="414"/>
    </location>
</feature>
<feature type="disulfide bond" evidence="1">
    <location>
        <begin position="46"/>
        <end position="72"/>
    </location>
</feature>
<feature type="disulfide bond" evidence="1">
    <location>
        <begin position="60"/>
        <end position="87"/>
    </location>
</feature>
<feature type="disulfide bond" evidence="1">
    <location>
        <begin position="97"/>
        <end position="109"/>
    </location>
</feature>
<feature type="disulfide bond" evidence="1">
    <location>
        <begin position="103"/>
        <end position="118"/>
    </location>
</feature>
<feature type="disulfide bond" evidence="1">
    <location>
        <begin position="120"/>
        <end position="129"/>
    </location>
</feature>
<feature type="disulfide bond" evidence="1">
    <location>
        <begin position="134"/>
        <end position="162"/>
    </location>
</feature>
<feature type="disulfide bond" evidence="1">
    <location>
        <begin position="160"/>
        <end position="169"/>
    </location>
</feature>
<feature type="disulfide bond" evidence="1">
    <location>
        <begin position="177"/>
        <end position="188"/>
    </location>
</feature>
<feature type="disulfide bond" evidence="1">
    <location>
        <begin position="182"/>
        <end position="197"/>
    </location>
</feature>
<feature type="disulfide bond" evidence="1">
    <location>
        <begin position="199"/>
        <end position="208"/>
    </location>
</feature>
<feature type="disulfide bond" evidence="1">
    <location>
        <begin position="216"/>
        <end position="294"/>
    </location>
</feature>
<feature type="disulfide bond" evidence="1">
    <location>
        <begin position="237"/>
        <end position="276"/>
    </location>
</feature>
<feature type="disulfide bond" evidence="1">
    <location>
        <begin position="265"/>
        <end position="289"/>
    </location>
</feature>
<feature type="disulfide bond" evidence="1">
    <location>
        <begin position="340"/>
        <end position="466"/>
    </location>
</feature>
<feature type="disulfide bond" evidence="1">
    <location>
        <begin position="378"/>
        <end position="394"/>
    </location>
</feature>
<feature type="disulfide bond" evidence="1">
    <location>
        <begin position="386"/>
        <end position="455"/>
    </location>
</feature>
<feature type="disulfide bond" evidence="1">
    <location>
        <begin position="417"/>
        <end position="420"/>
    </location>
</feature>
<feature type="disulfide bond" evidence="1">
    <location>
        <begin position="480"/>
        <end position="549"/>
    </location>
</feature>
<feature type="disulfide bond" evidence="1">
    <location>
        <begin position="512"/>
        <end position="528"/>
    </location>
</feature>
<feature type="disulfide bond" evidence="1">
    <location>
        <begin position="539"/>
        <end position="570"/>
    </location>
</feature>
<feature type="sequence conflict" description="In Ref. 2; AAH88187." evidence="9" ref="2">
    <original>SSPRD</original>
    <variation>MPQFPSLSDALDN</variation>
    <location>
        <begin position="320"/>
        <end position="324"/>
    </location>
</feature>
<keyword id="KW-0094">Blood coagulation</keyword>
<keyword id="KW-1015">Disulfide bond</keyword>
<keyword id="KW-0245">EGF-like domain</keyword>
<keyword id="KW-0280">Fibrinolysis</keyword>
<keyword id="KW-0325">Glycoprotein</keyword>
<keyword id="KW-0356">Hemostasis</keyword>
<keyword id="KW-0378">Hydrolase</keyword>
<keyword id="KW-0420">Kringle</keyword>
<keyword id="KW-0645">Protease</keyword>
<keyword id="KW-1185">Reference proteome</keyword>
<keyword id="KW-0677">Repeat</keyword>
<keyword id="KW-0964">Secreted</keyword>
<keyword id="KW-0720">Serine protease</keyword>
<keyword id="KW-0732">Signal</keyword>
<keyword id="KW-0865">Zymogen</keyword>
<gene>
    <name type="primary">F12</name>
</gene>
<comment type="function">
    <text evidence="2">Factor XII is a serum glycoprotein that participates in the initiation of blood coagulation, fibrinolysis, and the generation of bradykinin and angiotensin. Prekallikrein is cleaved by factor XII to form kallikrein, which then cleaves factor XII first to alpha-factor XIIa and then trypsin cleaves it to beta-factor XIIa. Alpha-factor XIIa activates factor XI to factor XIa (By similarity).</text>
</comment>
<comment type="catalytic activity">
    <reaction evidence="2">
        <text>Selective cleavage of Arg-|-Ile bonds in factor VII to form factor VIIa and factor XI to form factor XIa.</text>
        <dbReference type="EC" id="3.4.21.38"/>
    </reaction>
</comment>
<comment type="activity regulation">
    <text evidence="2">Activity is promoted in the presence of negatively charged surfaces.</text>
</comment>
<comment type="subunit">
    <text evidence="2">Interacts with HRG; the interaction, which is enhanced in the presence of zinc ions and inhibited by heparin-binding, inhibits factor XII autoactivation and contact-initiated coagulation.</text>
</comment>
<comment type="subcellular location">
    <subcellularLocation>
        <location evidence="1">Secreted</location>
    </subcellularLocation>
</comment>
<comment type="PTM">
    <text evidence="1">O- and N-glycosylated.</text>
</comment>
<comment type="similarity">
    <text evidence="5">Belongs to the peptidase S1 family.</text>
</comment>
<comment type="sequence caution" evidence="9">
    <conflict type="erroneous gene model prediction">
        <sequence resource="EMBL-CDS" id="EDL93987"/>
    </conflict>
</comment>